<protein>
    <recommendedName>
        <fullName>Zinc finger protein squeeze</fullName>
    </recommendedName>
</protein>
<evidence type="ECO:0000250" key="1"/>
<evidence type="ECO:0000255" key="2">
    <source>
        <dbReference type="PROSITE-ProRule" id="PRU00042"/>
    </source>
</evidence>
<evidence type="ECO:0000256" key="3">
    <source>
        <dbReference type="SAM" id="MobiDB-lite"/>
    </source>
</evidence>
<evidence type="ECO:0000305" key="4"/>
<dbReference type="EMBL" id="CM000070">
    <property type="protein sequence ID" value="EAL29162.2"/>
    <property type="molecule type" value="Genomic_DNA"/>
</dbReference>
<dbReference type="SMR" id="Q293Q2"/>
<dbReference type="FunCoup" id="Q293Q2">
    <property type="interactions" value="3"/>
</dbReference>
<dbReference type="STRING" id="46245.Q293Q2"/>
<dbReference type="eggNOG" id="KOG1721">
    <property type="taxonomic scope" value="Eukaryota"/>
</dbReference>
<dbReference type="HOGENOM" id="CLU_026739_0_0_1"/>
<dbReference type="InParanoid" id="Q293Q2"/>
<dbReference type="OMA" id="QRQAMND"/>
<dbReference type="Proteomes" id="UP000001819">
    <property type="component" value="Unplaced"/>
</dbReference>
<dbReference type="GO" id="GO:0005634">
    <property type="term" value="C:nucleus"/>
    <property type="evidence" value="ECO:0007669"/>
    <property type="project" value="UniProtKB-SubCell"/>
</dbReference>
<dbReference type="GO" id="GO:0008270">
    <property type="term" value="F:zinc ion binding"/>
    <property type="evidence" value="ECO:0007669"/>
    <property type="project" value="UniProtKB-KW"/>
</dbReference>
<dbReference type="GO" id="GO:0030154">
    <property type="term" value="P:cell differentiation"/>
    <property type="evidence" value="ECO:0007669"/>
    <property type="project" value="UniProtKB-KW"/>
</dbReference>
<dbReference type="GO" id="GO:0007399">
    <property type="term" value="P:nervous system development"/>
    <property type="evidence" value="ECO:0007669"/>
    <property type="project" value="UniProtKB-KW"/>
</dbReference>
<dbReference type="FunFam" id="3.30.160.60:FF:000158">
    <property type="entry name" value="Zinc finger protein 362"/>
    <property type="match status" value="1"/>
</dbReference>
<dbReference type="FunFam" id="3.30.160.60:FF:000648">
    <property type="entry name" value="Zinc finger protein rotund"/>
    <property type="match status" value="1"/>
</dbReference>
<dbReference type="FunFam" id="3.30.160.60:FF:001172">
    <property type="entry name" value="Zinc finger protein rotund"/>
    <property type="match status" value="1"/>
</dbReference>
<dbReference type="FunFam" id="3.30.160.60:FF:001678">
    <property type="entry name" value="Zinc finger protein rotund"/>
    <property type="match status" value="1"/>
</dbReference>
<dbReference type="Gene3D" id="3.30.160.60">
    <property type="entry name" value="Classic Zinc Finger"/>
    <property type="match status" value="4"/>
</dbReference>
<dbReference type="InterPro" id="IPR050636">
    <property type="entry name" value="C2H2-ZF_domain-containing"/>
</dbReference>
<dbReference type="InterPro" id="IPR036236">
    <property type="entry name" value="Znf_C2H2_sf"/>
</dbReference>
<dbReference type="InterPro" id="IPR013087">
    <property type="entry name" value="Znf_C2H2_type"/>
</dbReference>
<dbReference type="PANTHER" id="PTHR47772:SF13">
    <property type="entry name" value="GASTRULA ZINC FINGER PROTEIN XLCGF49.1-LIKE-RELATED"/>
    <property type="match status" value="1"/>
</dbReference>
<dbReference type="PANTHER" id="PTHR47772">
    <property type="entry name" value="ZINC FINGER PROTEIN 200"/>
    <property type="match status" value="1"/>
</dbReference>
<dbReference type="Pfam" id="PF00096">
    <property type="entry name" value="zf-C2H2"/>
    <property type="match status" value="3"/>
</dbReference>
<dbReference type="SMART" id="SM00355">
    <property type="entry name" value="ZnF_C2H2"/>
    <property type="match status" value="5"/>
</dbReference>
<dbReference type="SUPFAM" id="SSF57667">
    <property type="entry name" value="beta-beta-alpha zinc fingers"/>
    <property type="match status" value="3"/>
</dbReference>
<dbReference type="PROSITE" id="PS00028">
    <property type="entry name" value="ZINC_FINGER_C2H2_1"/>
    <property type="match status" value="5"/>
</dbReference>
<dbReference type="PROSITE" id="PS50157">
    <property type="entry name" value="ZINC_FINGER_C2H2_2"/>
    <property type="match status" value="5"/>
</dbReference>
<sequence length="550" mass="61388">MAELPTAPNGVSSGDYLHRSIDQLRSLTHLTTADLRTAQLVHDYKPFNINEFRQNVVERLDYSLKNGLVHHQQQQQQQQQQEMLQQQQQHQAHQEQQQQQQQQQQQHHHQQQQHHLKSSYSAPSSPPTPHEQQEQKYDPNRSPQRPLMSSGSNASSPEDDRRGSGGGPGGGGGGDGDQSKPYKCASCSKSFANSSYLSQHTRIHLGIKPYRCEICQRKFTQLSHLQQHIRTHTGDKPYKCRHAGCPKAFSQLSNLQSHSRCHQTDKPFKCNSCYKCFADEMTLLEHIPKHKDSKHLKTHICNLCGKSYTQETYLQKHLQKHAEKAEKQQQRHSSQVAAVQQHVPSGGIGLNLQRQAMNDVNAAYWAKMGADSAAASLAEAIQQQLPQTNGQTYANFATLQQHQQQQQQQQQDMLQQHHQRLADTPGHSHSPHEDPAGEDLVLRQTTPQHHLQQQQQQQQPSPGPGSSAFTPLSATVPPSHLQQHRGAPAATAAYLYQQNAAAAAAAFPTQLISLHQIRNYAHQPGAAGLIAGDHLTLGLSAVQAAKEKAQ</sequence>
<proteinExistence type="inferred from homology"/>
<feature type="chain" id="PRO_0000372666" description="Zinc finger protein squeeze">
    <location>
        <begin position="1"/>
        <end position="550"/>
    </location>
</feature>
<feature type="zinc finger region" description="C2H2-type 1" evidence="2">
    <location>
        <begin position="182"/>
        <end position="204"/>
    </location>
</feature>
<feature type="zinc finger region" description="C2H2-type 2" evidence="2">
    <location>
        <begin position="210"/>
        <end position="232"/>
    </location>
</feature>
<feature type="zinc finger region" description="C2H2-type 3" evidence="2">
    <location>
        <begin position="238"/>
        <end position="262"/>
    </location>
</feature>
<feature type="zinc finger region" description="C2H2-type 4" evidence="2">
    <location>
        <begin position="268"/>
        <end position="290"/>
    </location>
</feature>
<feature type="zinc finger region" description="C2H2-type 5" evidence="2">
    <location>
        <begin position="299"/>
        <end position="321"/>
    </location>
</feature>
<feature type="region of interest" description="Disordered" evidence="3">
    <location>
        <begin position="73"/>
        <end position="179"/>
    </location>
</feature>
<feature type="region of interest" description="Disordered" evidence="3">
    <location>
        <begin position="399"/>
        <end position="485"/>
    </location>
</feature>
<feature type="compositionally biased region" description="Low complexity" evidence="3">
    <location>
        <begin position="73"/>
        <end position="105"/>
    </location>
</feature>
<feature type="compositionally biased region" description="Basic residues" evidence="3">
    <location>
        <begin position="106"/>
        <end position="117"/>
    </location>
</feature>
<feature type="compositionally biased region" description="Polar residues" evidence="3">
    <location>
        <begin position="141"/>
        <end position="156"/>
    </location>
</feature>
<feature type="compositionally biased region" description="Gly residues" evidence="3">
    <location>
        <begin position="164"/>
        <end position="176"/>
    </location>
</feature>
<feature type="compositionally biased region" description="Low complexity" evidence="3">
    <location>
        <begin position="400"/>
        <end position="416"/>
    </location>
</feature>
<feature type="compositionally biased region" description="Low complexity" evidence="3">
    <location>
        <begin position="444"/>
        <end position="460"/>
    </location>
</feature>
<feature type="modified residue" description="Phosphothreonine" evidence="1">
    <location>
        <position position="424"/>
    </location>
</feature>
<feature type="modified residue" description="Phosphoserine" evidence="1">
    <location>
        <position position="428"/>
    </location>
</feature>
<feature type="modified residue" description="Phosphoserine" evidence="1">
    <location>
        <position position="430"/>
    </location>
</feature>
<feature type="modified residue" description="Phosphotyrosine" evidence="1">
    <location>
        <position position="494"/>
    </location>
</feature>
<feature type="modified residue" description="Phosphotyrosine" evidence="1">
    <location>
        <position position="496"/>
    </location>
</feature>
<accession>Q293Q2</accession>
<name>SQZ_DROPS</name>
<organism>
    <name type="scientific">Drosophila pseudoobscura pseudoobscura</name>
    <name type="common">Fruit fly</name>
    <dbReference type="NCBI Taxonomy" id="46245"/>
    <lineage>
        <taxon>Eukaryota</taxon>
        <taxon>Metazoa</taxon>
        <taxon>Ecdysozoa</taxon>
        <taxon>Arthropoda</taxon>
        <taxon>Hexapoda</taxon>
        <taxon>Insecta</taxon>
        <taxon>Pterygota</taxon>
        <taxon>Neoptera</taxon>
        <taxon>Endopterygota</taxon>
        <taxon>Diptera</taxon>
        <taxon>Brachycera</taxon>
        <taxon>Muscomorpha</taxon>
        <taxon>Ephydroidea</taxon>
        <taxon>Drosophilidae</taxon>
        <taxon>Drosophila</taxon>
        <taxon>Sophophora</taxon>
    </lineage>
</organism>
<gene>
    <name type="primary">sqz</name>
    <name type="ORF">GA18968</name>
</gene>
<reference key="1">
    <citation type="journal article" date="2005" name="Genome Res.">
        <title>Comparative genome sequencing of Drosophila pseudoobscura: chromosomal, gene, and cis-element evolution.</title>
        <authorList>
            <person name="Richards S."/>
            <person name="Liu Y."/>
            <person name="Bettencourt B.R."/>
            <person name="Hradecky P."/>
            <person name="Letovsky S."/>
            <person name="Nielsen R."/>
            <person name="Thornton K."/>
            <person name="Hubisz M.J."/>
            <person name="Chen R."/>
            <person name="Meisel R.P."/>
            <person name="Couronne O."/>
            <person name="Hua S."/>
            <person name="Smith M.A."/>
            <person name="Zhang P."/>
            <person name="Liu J."/>
            <person name="Bussemaker H.J."/>
            <person name="van Batenburg M.F."/>
            <person name="Howells S.L."/>
            <person name="Scherer S.E."/>
            <person name="Sodergren E."/>
            <person name="Matthews B.B."/>
            <person name="Crosby M.A."/>
            <person name="Schroeder A.J."/>
            <person name="Ortiz-Barrientos D."/>
            <person name="Rives C.M."/>
            <person name="Metzker M.L."/>
            <person name="Muzny D.M."/>
            <person name="Scott G."/>
            <person name="Steffen D."/>
            <person name="Wheeler D.A."/>
            <person name="Worley K.C."/>
            <person name="Havlak P."/>
            <person name="Durbin K.J."/>
            <person name="Egan A."/>
            <person name="Gill R."/>
            <person name="Hume J."/>
            <person name="Morgan M.B."/>
            <person name="Miner G."/>
            <person name="Hamilton C."/>
            <person name="Huang Y."/>
            <person name="Waldron L."/>
            <person name="Verduzco D."/>
            <person name="Clerc-Blankenburg K.P."/>
            <person name="Dubchak I."/>
            <person name="Noor M.A.F."/>
            <person name="Anderson W."/>
            <person name="White K.P."/>
            <person name="Clark A.G."/>
            <person name="Schaeffer S.W."/>
            <person name="Gelbart W.M."/>
            <person name="Weinstock G.M."/>
            <person name="Gibbs R.A."/>
        </authorList>
    </citation>
    <scope>NUCLEOTIDE SEQUENCE [LARGE SCALE GENOMIC DNA]</scope>
    <source>
        <strain>MV2-25 / Tucson 14011-0121.94</strain>
    </source>
</reference>
<comment type="function">
    <text evidence="1">Transcription factor involved in neuronal fate specification. First required in embryonic CNS development to define the number of cells that express apterous (ap) in the ap thoracic cluster of interneurons. Later on, it plays a central role in the combinatorial code of transcription factors that specifies the fate of the Tv neuron in the ap cluster by participating in the transcription regulation of FMRFa in Tv cells. Also required for projection neuron dendritic targeting (By similarity).</text>
</comment>
<comment type="subunit">
    <text evidence="1">Interacts with nab; which acts as a coactivator. Interacts with ap (By similarity).</text>
</comment>
<comment type="subcellular location">
    <subcellularLocation>
        <location evidence="1">Nucleus</location>
    </subcellularLocation>
</comment>
<comment type="similarity">
    <text evidence="4">Belongs to the krueppel C2H2-type zinc-finger protein family.</text>
</comment>
<keyword id="KW-0217">Developmental protein</keyword>
<keyword id="KW-0221">Differentiation</keyword>
<keyword id="KW-0479">Metal-binding</keyword>
<keyword id="KW-0524">Neurogenesis</keyword>
<keyword id="KW-0539">Nucleus</keyword>
<keyword id="KW-0597">Phosphoprotein</keyword>
<keyword id="KW-1185">Reference proteome</keyword>
<keyword id="KW-0677">Repeat</keyword>
<keyword id="KW-0804">Transcription</keyword>
<keyword id="KW-0805">Transcription regulation</keyword>
<keyword id="KW-0862">Zinc</keyword>
<keyword id="KW-0863">Zinc-finger</keyword>